<proteinExistence type="evidence at protein level"/>
<organism>
    <name type="scientific">Naja oxiana</name>
    <name type="common">Central Asian cobra</name>
    <name type="synonym">Oxus cobra</name>
    <dbReference type="NCBI Taxonomy" id="8657"/>
    <lineage>
        <taxon>Eukaryota</taxon>
        <taxon>Metazoa</taxon>
        <taxon>Chordata</taxon>
        <taxon>Craniata</taxon>
        <taxon>Vertebrata</taxon>
        <taxon>Euteleostomi</taxon>
        <taxon>Lepidosauria</taxon>
        <taxon>Squamata</taxon>
        <taxon>Bifurcata</taxon>
        <taxon>Unidentata</taxon>
        <taxon>Episquamata</taxon>
        <taxon>Toxicofera</taxon>
        <taxon>Serpentes</taxon>
        <taxon>Colubroidea</taxon>
        <taxon>Elapidae</taxon>
        <taxon>Elapinae</taxon>
        <taxon>Naja</taxon>
    </lineage>
</organism>
<protein>
    <recommendedName>
        <fullName evidence="5 6">Oxiana weak toxin</fullName>
        <shortName evidence="5">OWT</shortName>
    </recommendedName>
</protein>
<reference key="1">
    <citation type="submission" date="2008-04" db="UniProtKB">
        <title>New analogues of weak toxins from cobra venom.</title>
        <authorList>
            <person name="Starkov V.G."/>
            <person name="Tsetlin V.I."/>
            <person name="Utkin Y.N."/>
        </authorList>
    </citation>
    <scope>PROTEIN SEQUENCE</scope>
    <scope>FUNCTION</scope>
    <scope>SUBCELLULAR LOCATION</scope>
    <scope>MASS SPECTROMETRY</scope>
    <source>
        <tissue>Venom</tissue>
    </source>
</reference>
<reference key="2">
    <citation type="journal article" date="2009" name="Russ. J. Bioorg. Chem.">
        <title>New weak toxins from the cobra venom.</title>
        <authorList>
            <person name="Starkov V.G."/>
            <person name="Polyak Y.L."/>
            <person name="Vulfius E.A."/>
            <person name="Kryukova E.V."/>
            <person name="Tsetlin V.I."/>
            <person name="Utkin Y.N."/>
        </authorList>
    </citation>
    <scope>PROTEIN SEQUENCE</scope>
    <scope>FUNCTION</scope>
    <scope>SUBCELLULAR LOCATION</scope>
    <scope>MASS SPECTROMETRY</scope>
    <source>
        <tissue>Venom</tissue>
    </source>
</reference>
<reference key="3">
    <citation type="journal article" date="2015" name="J. Biol. Chem.">
        <title>Neurotoxins from snake venoms and alpha-conotoxin ImI inhibit functionally active ionotropic gamma-aminobutyric acid (GABA) receptors.</title>
        <authorList>
            <person name="Kudryavtsev D.S."/>
            <person name="Shelukhina I.V."/>
            <person name="Son L.V."/>
            <person name="Ojomoko L.O."/>
            <person name="Kryukova E.V."/>
            <person name="Lyukmanova E.N."/>
            <person name="Zhmak M.N."/>
            <person name="Dolgikh D.A."/>
            <person name="Ivanov I.A."/>
            <person name="Kasheverov I.E."/>
            <person name="Starkov V.G."/>
            <person name="Ramerstorfer J."/>
            <person name="Sieghart W."/>
            <person name="Tsetlin V.I."/>
            <person name="Utkin Y.N."/>
        </authorList>
    </citation>
    <scope>FUNCTION</scope>
    <source>
        <tissue>Venom</tissue>
    </source>
</reference>
<dbReference type="SMR" id="P85520"/>
<dbReference type="GO" id="GO:0005576">
    <property type="term" value="C:extracellular region"/>
    <property type="evidence" value="ECO:0007669"/>
    <property type="project" value="UniProtKB-SubCell"/>
</dbReference>
<dbReference type="GO" id="GO:0030550">
    <property type="term" value="F:acetylcholine receptor inhibitor activity"/>
    <property type="evidence" value="ECO:0007669"/>
    <property type="project" value="UniProtKB-KW"/>
</dbReference>
<dbReference type="GO" id="GO:0099106">
    <property type="term" value="F:ion channel regulator activity"/>
    <property type="evidence" value="ECO:0007669"/>
    <property type="project" value="UniProtKB-KW"/>
</dbReference>
<dbReference type="GO" id="GO:0090729">
    <property type="term" value="F:toxin activity"/>
    <property type="evidence" value="ECO:0007669"/>
    <property type="project" value="UniProtKB-KW"/>
</dbReference>
<dbReference type="CDD" id="cd00206">
    <property type="entry name" value="TFP_snake_toxin"/>
    <property type="match status" value="1"/>
</dbReference>
<dbReference type="FunFam" id="2.10.60.10:FF:000024">
    <property type="entry name" value="Cytotoxin 1"/>
    <property type="match status" value="1"/>
</dbReference>
<dbReference type="Gene3D" id="2.10.60.10">
    <property type="entry name" value="CD59"/>
    <property type="match status" value="1"/>
</dbReference>
<dbReference type="InterPro" id="IPR003571">
    <property type="entry name" value="Snake_3FTx"/>
</dbReference>
<dbReference type="InterPro" id="IPR045860">
    <property type="entry name" value="Snake_toxin-like_sf"/>
</dbReference>
<dbReference type="InterPro" id="IPR018354">
    <property type="entry name" value="Snake_toxin_con_site"/>
</dbReference>
<dbReference type="InterPro" id="IPR054131">
    <property type="entry name" value="Toxin_cobra-type"/>
</dbReference>
<dbReference type="Pfam" id="PF21947">
    <property type="entry name" value="Toxin_cobra-type"/>
    <property type="match status" value="1"/>
</dbReference>
<dbReference type="SUPFAM" id="SSF57302">
    <property type="entry name" value="Snake toxin-like"/>
    <property type="match status" value="1"/>
</dbReference>
<dbReference type="PROSITE" id="PS00272">
    <property type="entry name" value="SNAKE_TOXIN"/>
    <property type="match status" value="1"/>
</dbReference>
<name>3NO2_NAJOX</name>
<sequence>LTCLICPEKYCNKVHTCRNGEKICFKKFDQRKLLGKRYIRGCAATCPEAKPREIVECCSTDKCNH</sequence>
<comment type="function">
    <text evidence="4">Binds to muscle and neuronal nicotinic acetylcholine receptors (nAChR) (Ref.1). It binds to extracellular domain of rat alpha-7/CHRNA7 nAChR (IC(50)=2.2 uM) and to Torpedo californica membranes (IC(50)=30 uM) (Ref.1).</text>
</comment>
<comment type="subcellular location">
    <subcellularLocation>
        <location evidence="4">Secreted</location>
    </subcellularLocation>
</comment>
<comment type="tissue specificity">
    <text evidence="8">Expressed by the venom gland.</text>
</comment>
<comment type="mass spectrometry"/>
<comment type="miscellaneous">
    <text evidence="3">Negative results: does not inhibit GABA(A) channel composed of alpha-1-beta-3-gamma-2 (GABRA1-GABRB3-GABRG2) subunits.</text>
</comment>
<comment type="similarity">
    <text evidence="7">Belongs to the three-finger toxin family. Ancestral subfamily. Orphan group II sub-subfamily.</text>
</comment>
<accession>P85520</accession>
<keyword id="KW-0008">Acetylcholine receptor inhibiting toxin</keyword>
<keyword id="KW-0903">Direct protein sequencing</keyword>
<keyword id="KW-1015">Disulfide bond</keyword>
<keyword id="KW-0872">Ion channel impairing toxin</keyword>
<keyword id="KW-0528">Neurotoxin</keyword>
<keyword id="KW-0629">Postsynaptic neurotoxin</keyword>
<keyword id="KW-0964">Secreted</keyword>
<keyword id="KW-0800">Toxin</keyword>
<feature type="chain" id="PRO_0000337170" description="Oxiana weak toxin" evidence="4">
    <location>
        <begin position="1"/>
        <end position="65"/>
    </location>
</feature>
<feature type="disulfide bond" evidence="1">
    <location>
        <begin position="3"/>
        <end position="24"/>
    </location>
</feature>
<feature type="disulfide bond" evidence="1">
    <location>
        <begin position="6"/>
        <end position="11"/>
    </location>
</feature>
<feature type="disulfide bond" evidence="1">
    <location>
        <begin position="17"/>
        <end position="42"/>
    </location>
</feature>
<feature type="disulfide bond" evidence="1">
    <location>
        <begin position="46"/>
        <end position="57"/>
    </location>
</feature>
<feature type="disulfide bond" evidence="1">
    <location>
        <begin position="58"/>
        <end position="63"/>
    </location>
</feature>
<feature type="sequence conflict" description="In Ref. 1; AA sequence." evidence="7" ref="1">
    <original>D</original>
    <variation>T</variation>
    <location>
        <position position="29"/>
    </location>
</feature>
<evidence type="ECO:0000250" key="1">
    <source>
        <dbReference type="UniProtKB" id="Q8AY51"/>
    </source>
</evidence>
<evidence type="ECO:0000269" key="2">
    <source>
    </source>
</evidence>
<evidence type="ECO:0000269" key="3">
    <source>
    </source>
</evidence>
<evidence type="ECO:0000269" key="4">
    <source ref="1"/>
</evidence>
<evidence type="ECO:0000303" key="5">
    <source>
    </source>
</evidence>
<evidence type="ECO:0000303" key="6">
    <source ref="1"/>
</evidence>
<evidence type="ECO:0000305" key="7"/>
<evidence type="ECO:0000305" key="8">
    <source ref="1"/>
</evidence>